<feature type="chain" id="PRO_0000263408" description="Ribulokinase">
    <location>
        <begin position="1"/>
        <end position="545"/>
    </location>
</feature>
<name>ARAB_STAA8</name>
<accession>Q2G0M6</accession>
<evidence type="ECO:0000255" key="1">
    <source>
        <dbReference type="HAMAP-Rule" id="MF_00520"/>
    </source>
</evidence>
<sequence>MSYSIGIDYGTASGRVFLINTTNGQVVSKFVKPYTHGVIESELNGLKIPHTYALQNSNDYLEIMEEGISYIVRESKIDPDNIVGIGIDFTSSTIIFTDENLNPVHNLKQFKNNPHAYVKLWKHHGAYKEAEKLYQTAIENNNKWLGHYGYNVSSEWMIPKIMEVMNRAPEIMEKTAYIMEAGDWIVNKLTNKNVRSNCGLGFKAFWEEETGFHYDLFDKIDPKLSKVIQDKVSAPVVNIGEAVGKLDDKMAQKLGLSKETMVSPFIIDAHASLLGIGSEKDKEMTMVMGTSTCHLMLNEKQHQVPGISGSVKGAIIPELFAYEAGQSAVGDLFEYVAKQAPKSYVDEAENRNMTVFELMNEKIKHQMPGESGLIALDWHNGNRSVLSDSNLTGCIFGLTLQTKHEDIYRAYLEATAFGTKMIMQQYQDWHMEVEKVFACGGIPKKNAVMMDIYANVLNKKLIVMDSEYAPAIGAAILGAVSGGAHNSINDAVDAMKEPILYEINPEAEKVQRYETLFKAYKALHDIHGYKKANIMKDIQSLRVEG</sequence>
<organism>
    <name type="scientific">Staphylococcus aureus (strain NCTC 8325 / PS 47)</name>
    <dbReference type="NCBI Taxonomy" id="93061"/>
    <lineage>
        <taxon>Bacteria</taxon>
        <taxon>Bacillati</taxon>
        <taxon>Bacillota</taxon>
        <taxon>Bacilli</taxon>
        <taxon>Bacillales</taxon>
        <taxon>Staphylococcaceae</taxon>
        <taxon>Staphylococcus</taxon>
    </lineage>
</organism>
<protein>
    <recommendedName>
        <fullName evidence="1">Ribulokinase</fullName>
        <ecNumber evidence="1">2.7.1.16</ecNumber>
    </recommendedName>
</protein>
<keyword id="KW-0054">Arabinose catabolism</keyword>
<keyword id="KW-0067">ATP-binding</keyword>
<keyword id="KW-0119">Carbohydrate metabolism</keyword>
<keyword id="KW-0418">Kinase</keyword>
<keyword id="KW-0547">Nucleotide-binding</keyword>
<keyword id="KW-1185">Reference proteome</keyword>
<keyword id="KW-0808">Transferase</keyword>
<proteinExistence type="inferred from homology"/>
<comment type="catalytic activity">
    <reaction evidence="1">
        <text>D-ribulose + ATP = D-ribulose 5-phosphate + ADP + H(+)</text>
        <dbReference type="Rhea" id="RHEA:17601"/>
        <dbReference type="ChEBI" id="CHEBI:15378"/>
        <dbReference type="ChEBI" id="CHEBI:17173"/>
        <dbReference type="ChEBI" id="CHEBI:30616"/>
        <dbReference type="ChEBI" id="CHEBI:58121"/>
        <dbReference type="ChEBI" id="CHEBI:456216"/>
        <dbReference type="EC" id="2.7.1.16"/>
    </reaction>
</comment>
<comment type="catalytic activity">
    <reaction evidence="1">
        <text>L-ribulose + ATP = L-ribulose 5-phosphate + ADP + H(+)</text>
        <dbReference type="Rhea" id="RHEA:22072"/>
        <dbReference type="ChEBI" id="CHEBI:15378"/>
        <dbReference type="ChEBI" id="CHEBI:16880"/>
        <dbReference type="ChEBI" id="CHEBI:30616"/>
        <dbReference type="ChEBI" id="CHEBI:58226"/>
        <dbReference type="ChEBI" id="CHEBI:456216"/>
        <dbReference type="EC" id="2.7.1.16"/>
    </reaction>
</comment>
<comment type="pathway">
    <text evidence="1">Carbohydrate degradation; L-arabinose degradation via L-ribulose; D-xylulose 5-phosphate from L-arabinose (bacterial route): step 2/3.</text>
</comment>
<comment type="similarity">
    <text evidence="1">Belongs to the ribulokinase family.</text>
</comment>
<reference key="1">
    <citation type="book" date="2006" name="Gram positive pathogens, 2nd edition">
        <title>The Staphylococcus aureus NCTC 8325 genome.</title>
        <editorList>
            <person name="Fischetti V."/>
            <person name="Novick R."/>
            <person name="Ferretti J."/>
            <person name="Portnoy D."/>
            <person name="Rood J."/>
        </editorList>
        <authorList>
            <person name="Gillaspy A.F."/>
            <person name="Worrell V."/>
            <person name="Orvis J."/>
            <person name="Roe B.A."/>
            <person name="Dyer D.W."/>
            <person name="Iandolo J.J."/>
        </authorList>
    </citation>
    <scope>NUCLEOTIDE SEQUENCE [LARGE SCALE GENOMIC DNA]</scope>
    <source>
        <strain>NCTC 8325 / PS 47</strain>
    </source>
</reference>
<gene>
    <name evidence="1" type="primary">araB</name>
    <name type="ordered locus">SAOUHSC_00534</name>
</gene>
<dbReference type="EC" id="2.7.1.16" evidence="1"/>
<dbReference type="EMBL" id="CP000253">
    <property type="protein sequence ID" value="ABD29682.1"/>
    <property type="molecule type" value="Genomic_DNA"/>
</dbReference>
<dbReference type="RefSeq" id="WP_000122340.1">
    <property type="nucleotide sequence ID" value="NZ_LS483365.1"/>
</dbReference>
<dbReference type="RefSeq" id="YP_499106.1">
    <property type="nucleotide sequence ID" value="NC_007795.1"/>
</dbReference>
<dbReference type="SMR" id="Q2G0M6"/>
<dbReference type="STRING" id="93061.SAOUHSC_00534"/>
<dbReference type="PaxDb" id="1280-SAXN108_0606"/>
<dbReference type="GeneID" id="3920814"/>
<dbReference type="KEGG" id="sao:SAOUHSC_00534"/>
<dbReference type="PATRIC" id="fig|93061.5.peg.480"/>
<dbReference type="eggNOG" id="COG1069">
    <property type="taxonomic scope" value="Bacteria"/>
</dbReference>
<dbReference type="HOGENOM" id="CLU_009281_9_1_9"/>
<dbReference type="OrthoDB" id="9805576at2"/>
<dbReference type="UniPathway" id="UPA00145">
    <property type="reaction ID" value="UER00566"/>
</dbReference>
<dbReference type="PRO" id="PR:Q2G0M6"/>
<dbReference type="Proteomes" id="UP000008816">
    <property type="component" value="Chromosome"/>
</dbReference>
<dbReference type="GO" id="GO:0005737">
    <property type="term" value="C:cytoplasm"/>
    <property type="evidence" value="ECO:0000318"/>
    <property type="project" value="GO_Central"/>
</dbReference>
<dbReference type="GO" id="GO:0005524">
    <property type="term" value="F:ATP binding"/>
    <property type="evidence" value="ECO:0007669"/>
    <property type="project" value="UniProtKB-KW"/>
</dbReference>
<dbReference type="GO" id="GO:0019150">
    <property type="term" value="F:D-ribulokinase activity"/>
    <property type="evidence" value="ECO:0000318"/>
    <property type="project" value="GO_Central"/>
</dbReference>
<dbReference type="GO" id="GO:0008741">
    <property type="term" value="F:ribulokinase activity"/>
    <property type="evidence" value="ECO:0007669"/>
    <property type="project" value="UniProtKB-UniRule"/>
</dbReference>
<dbReference type="GO" id="GO:0019569">
    <property type="term" value="P:L-arabinose catabolic process to xylulose 5-phosphate"/>
    <property type="evidence" value="ECO:0007669"/>
    <property type="project" value="UniProtKB-UniRule"/>
</dbReference>
<dbReference type="GO" id="GO:0019321">
    <property type="term" value="P:pentose metabolic process"/>
    <property type="evidence" value="ECO:0000318"/>
    <property type="project" value="GO_Central"/>
</dbReference>
<dbReference type="CDD" id="cd07781">
    <property type="entry name" value="ASKHA_NBD_FGGY_L-RBK"/>
    <property type="match status" value="1"/>
</dbReference>
<dbReference type="Gene3D" id="1.20.58.2240">
    <property type="match status" value="1"/>
</dbReference>
<dbReference type="Gene3D" id="3.30.420.40">
    <property type="match status" value="1"/>
</dbReference>
<dbReference type="HAMAP" id="MF_00520">
    <property type="entry name" value="Ribulokinase"/>
    <property type="match status" value="1"/>
</dbReference>
<dbReference type="InterPro" id="IPR043129">
    <property type="entry name" value="ATPase_NBD"/>
</dbReference>
<dbReference type="InterPro" id="IPR000577">
    <property type="entry name" value="Carb_kinase_FGGY"/>
</dbReference>
<dbReference type="InterPro" id="IPR018485">
    <property type="entry name" value="FGGY_C"/>
</dbReference>
<dbReference type="InterPro" id="IPR018484">
    <property type="entry name" value="FGGY_N"/>
</dbReference>
<dbReference type="InterPro" id="IPR005929">
    <property type="entry name" value="Ribulokinase"/>
</dbReference>
<dbReference type="NCBIfam" id="NF003154">
    <property type="entry name" value="PRK04123.1"/>
    <property type="match status" value="1"/>
</dbReference>
<dbReference type="PANTHER" id="PTHR43435:SF4">
    <property type="entry name" value="FGGY CARBOHYDRATE KINASE DOMAIN-CONTAINING PROTEIN"/>
    <property type="match status" value="1"/>
</dbReference>
<dbReference type="PANTHER" id="PTHR43435">
    <property type="entry name" value="RIBULOKINASE"/>
    <property type="match status" value="1"/>
</dbReference>
<dbReference type="Pfam" id="PF02782">
    <property type="entry name" value="FGGY_C"/>
    <property type="match status" value="1"/>
</dbReference>
<dbReference type="Pfam" id="PF00370">
    <property type="entry name" value="FGGY_N"/>
    <property type="match status" value="1"/>
</dbReference>
<dbReference type="PIRSF" id="PIRSF000538">
    <property type="entry name" value="GlpK"/>
    <property type="match status" value="1"/>
</dbReference>
<dbReference type="SUPFAM" id="SSF53067">
    <property type="entry name" value="Actin-like ATPase domain"/>
    <property type="match status" value="2"/>
</dbReference>